<evidence type="ECO:0000255" key="1">
    <source>
        <dbReference type="HAMAP-Rule" id="MF_01398"/>
    </source>
</evidence>
<keyword id="KW-0066">ATP synthesis</keyword>
<keyword id="KW-1003">Cell membrane</keyword>
<keyword id="KW-0138">CF(0)</keyword>
<keyword id="KW-0375">Hydrogen ion transport</keyword>
<keyword id="KW-0406">Ion transport</keyword>
<keyword id="KW-0472">Membrane</keyword>
<keyword id="KW-0812">Transmembrane</keyword>
<keyword id="KW-1133">Transmembrane helix</keyword>
<keyword id="KW-0813">Transport</keyword>
<proteinExistence type="inferred from homology"/>
<protein>
    <recommendedName>
        <fullName evidence="1">ATP synthase subunit b</fullName>
    </recommendedName>
    <alternativeName>
        <fullName evidence="1">ATP synthase F(0) sector subunit b</fullName>
    </alternativeName>
    <alternativeName>
        <fullName evidence="1">ATPase subunit I</fullName>
    </alternativeName>
    <alternativeName>
        <fullName evidence="1">F-type ATPase subunit b</fullName>
        <shortName evidence="1">F-ATPase subunit b</shortName>
    </alternativeName>
</protein>
<sequence length="173" mass="19539">MTETANLFVLGAAGGVEWGTVIVQVLTFIVLLALLKKFAWGPLKDVMDKRERDINRDIDDAEQAKLNAQKLEEENKQKLKETQEEVQKILEDAKVQARQQQEQIIHEANVRANGMIETAQSEINSQKERAIADINNQVSELSVLIASKVLRKEISEQDQKALVDKYLKEAGDK</sequence>
<accession>Q7A0C4</accession>
<reference key="1">
    <citation type="journal article" date="2002" name="Lancet">
        <title>Genome and virulence determinants of high virulence community-acquired MRSA.</title>
        <authorList>
            <person name="Baba T."/>
            <person name="Takeuchi F."/>
            <person name="Kuroda M."/>
            <person name="Yuzawa H."/>
            <person name="Aoki K."/>
            <person name="Oguchi A."/>
            <person name="Nagai Y."/>
            <person name="Iwama N."/>
            <person name="Asano K."/>
            <person name="Naimi T."/>
            <person name="Kuroda H."/>
            <person name="Cui L."/>
            <person name="Yamamoto K."/>
            <person name="Hiramatsu K."/>
        </authorList>
    </citation>
    <scope>NUCLEOTIDE SEQUENCE [LARGE SCALE GENOMIC DNA]</scope>
    <source>
        <strain>MW2</strain>
    </source>
</reference>
<organism>
    <name type="scientific">Staphylococcus aureus (strain MW2)</name>
    <dbReference type="NCBI Taxonomy" id="196620"/>
    <lineage>
        <taxon>Bacteria</taxon>
        <taxon>Bacillati</taxon>
        <taxon>Bacillota</taxon>
        <taxon>Bacilli</taxon>
        <taxon>Bacillales</taxon>
        <taxon>Staphylococcaceae</taxon>
        <taxon>Staphylococcus</taxon>
    </lineage>
</organism>
<gene>
    <name evidence="1" type="primary">atpF</name>
    <name type="ordered locus">MW2031</name>
</gene>
<feature type="chain" id="PRO_0000223710" description="ATP synthase subunit b">
    <location>
        <begin position="1"/>
        <end position="173"/>
    </location>
</feature>
<feature type="transmembrane region" description="Helical" evidence="1">
    <location>
        <begin position="15"/>
        <end position="35"/>
    </location>
</feature>
<dbReference type="EMBL" id="BA000033">
    <property type="protein sequence ID" value="BAB95896.1"/>
    <property type="molecule type" value="Genomic_DNA"/>
</dbReference>
<dbReference type="RefSeq" id="WP_000140679.1">
    <property type="nucleotide sequence ID" value="NC_003923.1"/>
</dbReference>
<dbReference type="SMR" id="Q7A0C4"/>
<dbReference type="KEGG" id="sam:MW2031"/>
<dbReference type="HOGENOM" id="CLU_079215_4_2_9"/>
<dbReference type="GO" id="GO:0005886">
    <property type="term" value="C:plasma membrane"/>
    <property type="evidence" value="ECO:0007669"/>
    <property type="project" value="UniProtKB-SubCell"/>
</dbReference>
<dbReference type="GO" id="GO:0045259">
    <property type="term" value="C:proton-transporting ATP synthase complex"/>
    <property type="evidence" value="ECO:0007669"/>
    <property type="project" value="UniProtKB-KW"/>
</dbReference>
<dbReference type="GO" id="GO:0046933">
    <property type="term" value="F:proton-transporting ATP synthase activity, rotational mechanism"/>
    <property type="evidence" value="ECO:0007669"/>
    <property type="project" value="UniProtKB-UniRule"/>
</dbReference>
<dbReference type="GO" id="GO:0046961">
    <property type="term" value="F:proton-transporting ATPase activity, rotational mechanism"/>
    <property type="evidence" value="ECO:0007669"/>
    <property type="project" value="TreeGrafter"/>
</dbReference>
<dbReference type="CDD" id="cd06503">
    <property type="entry name" value="ATP-synt_Fo_b"/>
    <property type="match status" value="1"/>
</dbReference>
<dbReference type="HAMAP" id="MF_01398">
    <property type="entry name" value="ATP_synth_b_bprime"/>
    <property type="match status" value="1"/>
</dbReference>
<dbReference type="InterPro" id="IPR028987">
    <property type="entry name" value="ATP_synth_B-like_membr_sf"/>
</dbReference>
<dbReference type="InterPro" id="IPR002146">
    <property type="entry name" value="ATP_synth_b/b'su_bac/chlpt"/>
</dbReference>
<dbReference type="InterPro" id="IPR005864">
    <property type="entry name" value="ATP_synth_F0_bsu_bac"/>
</dbReference>
<dbReference type="InterPro" id="IPR050059">
    <property type="entry name" value="ATP_synthase_B_chain"/>
</dbReference>
<dbReference type="NCBIfam" id="TIGR01144">
    <property type="entry name" value="ATP_synt_b"/>
    <property type="match status" value="1"/>
</dbReference>
<dbReference type="NCBIfam" id="NF009987">
    <property type="entry name" value="PRK13453.1"/>
    <property type="match status" value="1"/>
</dbReference>
<dbReference type="PANTHER" id="PTHR33445:SF1">
    <property type="entry name" value="ATP SYNTHASE SUBUNIT B"/>
    <property type="match status" value="1"/>
</dbReference>
<dbReference type="PANTHER" id="PTHR33445">
    <property type="entry name" value="ATP SYNTHASE SUBUNIT B', CHLOROPLASTIC"/>
    <property type="match status" value="1"/>
</dbReference>
<dbReference type="Pfam" id="PF00430">
    <property type="entry name" value="ATP-synt_B"/>
    <property type="match status" value="1"/>
</dbReference>
<dbReference type="SUPFAM" id="SSF81573">
    <property type="entry name" value="F1F0 ATP synthase subunit B, membrane domain"/>
    <property type="match status" value="1"/>
</dbReference>
<comment type="function">
    <text evidence="1">F(1)F(0) ATP synthase produces ATP from ADP in the presence of a proton or sodium gradient. F-type ATPases consist of two structural domains, F(1) containing the extramembraneous catalytic core and F(0) containing the membrane proton channel, linked together by a central stalk and a peripheral stalk. During catalysis, ATP synthesis in the catalytic domain of F(1) is coupled via a rotary mechanism of the central stalk subunits to proton translocation.</text>
</comment>
<comment type="function">
    <text evidence="1">Component of the F(0) channel, it forms part of the peripheral stalk, linking F(1) to F(0).</text>
</comment>
<comment type="subunit">
    <text evidence="1">F-type ATPases have 2 components, F(1) - the catalytic core - and F(0) - the membrane proton channel. F(1) has five subunits: alpha(3), beta(3), gamma(1), delta(1), epsilon(1). F(0) has three main subunits: a(1), b(2) and c(10-14). The alpha and beta chains form an alternating ring which encloses part of the gamma chain. F(1) is attached to F(0) by a central stalk formed by the gamma and epsilon chains, while a peripheral stalk is formed by the delta and b chains.</text>
</comment>
<comment type="subcellular location">
    <subcellularLocation>
        <location evidence="1">Cell membrane</location>
        <topology evidence="1">Single-pass membrane protein</topology>
    </subcellularLocation>
</comment>
<comment type="similarity">
    <text evidence="1">Belongs to the ATPase B chain family.</text>
</comment>
<name>ATPF_STAAW</name>